<keyword id="KW-0012">Acyltransferase</keyword>
<keyword id="KW-0963">Cytoplasm</keyword>
<keyword id="KW-0808">Transferase</keyword>
<sequence>MSVSPVSIVSTPVAVSASPAGAPVQPVTVRWRGREAYEASFDAMRAFTDTRTADTGDEIWVVEHPPVYTLGQAGDPAHLLVADSGVPLVKVDRGGQITYHGPGQIVVYLLLDLRRRKLMVRTLVTKIEEAVIETLAAYNLASVRKAGAPGIYVASGVHEGAKIAALGLKIRNGCSYHGLSLNVKMDLRPFLAINPCGYAGLETVDMASLAVAADWNDVAHTLVGRLIANLDGASAAADKPHALEQSND</sequence>
<proteinExistence type="inferred from homology"/>
<reference key="1">
    <citation type="submission" date="2008-02" db="EMBL/GenBank/DDBJ databases">
        <title>Complete sequence of chromosome 1 of Burkholderia cenocepacia MC0-3.</title>
        <authorList>
            <person name="Copeland A."/>
            <person name="Lucas S."/>
            <person name="Lapidus A."/>
            <person name="Barry K."/>
            <person name="Bruce D."/>
            <person name="Goodwin L."/>
            <person name="Glavina del Rio T."/>
            <person name="Dalin E."/>
            <person name="Tice H."/>
            <person name="Pitluck S."/>
            <person name="Chain P."/>
            <person name="Malfatti S."/>
            <person name="Shin M."/>
            <person name="Vergez L."/>
            <person name="Schmutz J."/>
            <person name="Larimer F."/>
            <person name="Land M."/>
            <person name="Hauser L."/>
            <person name="Kyrpides N."/>
            <person name="Mikhailova N."/>
            <person name="Tiedje J."/>
            <person name="Richardson P."/>
        </authorList>
    </citation>
    <scope>NUCLEOTIDE SEQUENCE [LARGE SCALE GENOMIC DNA]</scope>
    <source>
        <strain>MC0-3</strain>
    </source>
</reference>
<organism>
    <name type="scientific">Burkholderia orbicola (strain MC0-3)</name>
    <dbReference type="NCBI Taxonomy" id="406425"/>
    <lineage>
        <taxon>Bacteria</taxon>
        <taxon>Pseudomonadati</taxon>
        <taxon>Pseudomonadota</taxon>
        <taxon>Betaproteobacteria</taxon>
        <taxon>Burkholderiales</taxon>
        <taxon>Burkholderiaceae</taxon>
        <taxon>Burkholderia</taxon>
        <taxon>Burkholderia cepacia complex</taxon>
        <taxon>Burkholderia orbicola</taxon>
    </lineage>
</organism>
<evidence type="ECO:0000255" key="1">
    <source>
        <dbReference type="HAMAP-Rule" id="MF_00013"/>
    </source>
</evidence>
<evidence type="ECO:0000255" key="2">
    <source>
        <dbReference type="PROSITE-ProRule" id="PRU01067"/>
    </source>
</evidence>
<name>LIPB_BURO0</name>
<accession>B1JZ91</accession>
<gene>
    <name evidence="1" type="primary">lipB</name>
    <name type="ordered locus">Bcenmc03_2898</name>
</gene>
<protein>
    <recommendedName>
        <fullName evidence="1">Octanoyltransferase</fullName>
        <ecNumber evidence="1">2.3.1.181</ecNumber>
    </recommendedName>
    <alternativeName>
        <fullName evidence="1">Lipoate-protein ligase B</fullName>
    </alternativeName>
    <alternativeName>
        <fullName evidence="1">Lipoyl/octanoyl transferase</fullName>
    </alternativeName>
    <alternativeName>
        <fullName evidence="1">Octanoyl-[acyl-carrier-protein]-protein N-octanoyltransferase</fullName>
    </alternativeName>
</protein>
<dbReference type="EC" id="2.3.1.181" evidence="1"/>
<dbReference type="EMBL" id="CP000958">
    <property type="protein sequence ID" value="ACA92057.1"/>
    <property type="molecule type" value="Genomic_DNA"/>
</dbReference>
<dbReference type="RefSeq" id="WP_012329294.1">
    <property type="nucleotide sequence ID" value="NC_010508.1"/>
</dbReference>
<dbReference type="SMR" id="B1JZ91"/>
<dbReference type="GeneID" id="83049681"/>
<dbReference type="KEGG" id="bcm:Bcenmc03_2898"/>
<dbReference type="HOGENOM" id="CLU_035168_3_1_4"/>
<dbReference type="UniPathway" id="UPA00538">
    <property type="reaction ID" value="UER00592"/>
</dbReference>
<dbReference type="Proteomes" id="UP000002169">
    <property type="component" value="Chromosome 1"/>
</dbReference>
<dbReference type="GO" id="GO:0005737">
    <property type="term" value="C:cytoplasm"/>
    <property type="evidence" value="ECO:0007669"/>
    <property type="project" value="UniProtKB-SubCell"/>
</dbReference>
<dbReference type="GO" id="GO:0033819">
    <property type="term" value="F:lipoyl(octanoyl) transferase activity"/>
    <property type="evidence" value="ECO:0007669"/>
    <property type="project" value="UniProtKB-EC"/>
</dbReference>
<dbReference type="GO" id="GO:0036211">
    <property type="term" value="P:protein modification process"/>
    <property type="evidence" value="ECO:0007669"/>
    <property type="project" value="InterPro"/>
</dbReference>
<dbReference type="CDD" id="cd16444">
    <property type="entry name" value="LipB"/>
    <property type="match status" value="1"/>
</dbReference>
<dbReference type="FunFam" id="3.30.930.10:FF:000020">
    <property type="entry name" value="Octanoyltransferase"/>
    <property type="match status" value="1"/>
</dbReference>
<dbReference type="Gene3D" id="3.30.930.10">
    <property type="entry name" value="Bira Bifunctional Protein, Domain 2"/>
    <property type="match status" value="1"/>
</dbReference>
<dbReference type="HAMAP" id="MF_00013">
    <property type="entry name" value="LipB"/>
    <property type="match status" value="1"/>
</dbReference>
<dbReference type="InterPro" id="IPR045864">
    <property type="entry name" value="aa-tRNA-synth_II/BPL/LPL"/>
</dbReference>
<dbReference type="InterPro" id="IPR004143">
    <property type="entry name" value="BPL_LPL_catalytic"/>
</dbReference>
<dbReference type="InterPro" id="IPR000544">
    <property type="entry name" value="Octanoyltransferase"/>
</dbReference>
<dbReference type="InterPro" id="IPR020605">
    <property type="entry name" value="Octanoyltransferase_CS"/>
</dbReference>
<dbReference type="NCBIfam" id="TIGR00214">
    <property type="entry name" value="lipB"/>
    <property type="match status" value="1"/>
</dbReference>
<dbReference type="NCBIfam" id="NF010922">
    <property type="entry name" value="PRK14342.1"/>
    <property type="match status" value="1"/>
</dbReference>
<dbReference type="NCBIfam" id="NF010923">
    <property type="entry name" value="PRK14343.1"/>
    <property type="match status" value="1"/>
</dbReference>
<dbReference type="PANTHER" id="PTHR10993:SF7">
    <property type="entry name" value="LIPOYLTRANSFERASE 2, MITOCHONDRIAL-RELATED"/>
    <property type="match status" value="1"/>
</dbReference>
<dbReference type="PANTHER" id="PTHR10993">
    <property type="entry name" value="OCTANOYLTRANSFERASE"/>
    <property type="match status" value="1"/>
</dbReference>
<dbReference type="Pfam" id="PF21948">
    <property type="entry name" value="LplA-B_cat"/>
    <property type="match status" value="1"/>
</dbReference>
<dbReference type="PIRSF" id="PIRSF016262">
    <property type="entry name" value="LPLase"/>
    <property type="match status" value="1"/>
</dbReference>
<dbReference type="SUPFAM" id="SSF55681">
    <property type="entry name" value="Class II aaRS and biotin synthetases"/>
    <property type="match status" value="1"/>
</dbReference>
<dbReference type="PROSITE" id="PS51733">
    <property type="entry name" value="BPL_LPL_CATALYTIC"/>
    <property type="match status" value="1"/>
</dbReference>
<dbReference type="PROSITE" id="PS01313">
    <property type="entry name" value="LIPB"/>
    <property type="match status" value="1"/>
</dbReference>
<comment type="function">
    <text evidence="1">Catalyzes the transfer of endogenously produced octanoic acid from octanoyl-acyl-carrier-protein onto the lipoyl domains of lipoate-dependent enzymes. Lipoyl-ACP can also act as a substrate although octanoyl-ACP is likely to be the physiological substrate.</text>
</comment>
<comment type="catalytic activity">
    <reaction evidence="1">
        <text>octanoyl-[ACP] + L-lysyl-[protein] = N(6)-octanoyl-L-lysyl-[protein] + holo-[ACP] + H(+)</text>
        <dbReference type="Rhea" id="RHEA:17665"/>
        <dbReference type="Rhea" id="RHEA-COMP:9636"/>
        <dbReference type="Rhea" id="RHEA-COMP:9685"/>
        <dbReference type="Rhea" id="RHEA-COMP:9752"/>
        <dbReference type="Rhea" id="RHEA-COMP:9928"/>
        <dbReference type="ChEBI" id="CHEBI:15378"/>
        <dbReference type="ChEBI" id="CHEBI:29969"/>
        <dbReference type="ChEBI" id="CHEBI:64479"/>
        <dbReference type="ChEBI" id="CHEBI:78463"/>
        <dbReference type="ChEBI" id="CHEBI:78809"/>
        <dbReference type="EC" id="2.3.1.181"/>
    </reaction>
</comment>
<comment type="pathway">
    <text evidence="1">Protein modification; protein lipoylation via endogenous pathway; protein N(6)-(lipoyl)lysine from octanoyl-[acyl-carrier-protein]: step 1/2.</text>
</comment>
<comment type="subcellular location">
    <subcellularLocation>
        <location evidence="1">Cytoplasm</location>
    </subcellularLocation>
</comment>
<comment type="miscellaneous">
    <text evidence="1">In the reaction, the free carboxyl group of octanoic acid is attached via an amide linkage to the epsilon-amino group of a specific lysine residue of lipoyl domains of lipoate-dependent enzymes.</text>
</comment>
<comment type="similarity">
    <text evidence="1">Belongs to the LipB family.</text>
</comment>
<feature type="chain" id="PRO_1000089442" description="Octanoyltransferase">
    <location>
        <begin position="1"/>
        <end position="248"/>
    </location>
</feature>
<feature type="domain" description="BPL/LPL catalytic" evidence="2">
    <location>
        <begin position="53"/>
        <end position="238"/>
    </location>
</feature>
<feature type="active site" description="Acyl-thioester intermediate" evidence="1">
    <location>
        <position position="196"/>
    </location>
</feature>
<feature type="binding site" evidence="1">
    <location>
        <begin position="93"/>
        <end position="100"/>
    </location>
    <ligand>
        <name>substrate</name>
    </ligand>
</feature>
<feature type="binding site" evidence="1">
    <location>
        <begin position="165"/>
        <end position="167"/>
    </location>
    <ligand>
        <name>substrate</name>
    </ligand>
</feature>
<feature type="binding site" evidence="1">
    <location>
        <begin position="178"/>
        <end position="180"/>
    </location>
    <ligand>
        <name>substrate</name>
    </ligand>
</feature>
<feature type="site" description="Lowers pKa of active site Cys" evidence="1">
    <location>
        <position position="162"/>
    </location>
</feature>